<protein>
    <recommendedName>
        <fullName evidence="1">Ribonucleoside-diphosphate reductase small subunit</fullName>
        <ecNumber evidence="1">1.17.4.1</ecNumber>
    </recommendedName>
    <alternativeName>
        <fullName evidence="1">Ribonucleotide reductase small subunit</fullName>
    </alternativeName>
</protein>
<gene>
    <name evidence="1" type="primary">RIR2</name>
</gene>
<proteinExistence type="inferred from homology"/>
<sequence>MDPAVSPASTDPLDTHASGAGAAPIPVCPTPERYFYTSQCPDINHLRSLSILNRWLETELVFVGDEEDVSKLSEGELGFYRFLFAFLSAADDLVTENLGGLSGLFEQKDILHYYVEQECIEVVHSRVYNIIQLVLFHNNDQARRAYVARTINHPAIRVKVDWLEARVRECDSIPEKFILMILIEGVFFAASFAAIAYLRTNNLLRVTCQSNDLISRDEAVHTTASCYIYNNYLGGHAKPEAARVYRLFREAVDIEIGFIRSQAPTDSSILSPGALAAIENYVRFSADRLLGLIHMQPLYSAPAPDASFPLSLMSTDKHTNFFECRSTSYAGAVVNDL</sequence>
<dbReference type="EC" id="1.17.4.1" evidence="1"/>
<dbReference type="EMBL" id="M12700">
    <property type="protein sequence ID" value="AAA45807.1"/>
    <property type="molecule type" value="Genomic_DNA"/>
</dbReference>
<dbReference type="EMBL" id="X00048">
    <property type="protein sequence ID" value="CAA24930.1"/>
    <property type="molecule type" value="Genomic_DNA"/>
</dbReference>
<dbReference type="PIR" id="A00528">
    <property type="entry name" value="WMBE32"/>
</dbReference>
<dbReference type="PIR" id="A00529">
    <property type="entry name" value="WMBEB2"/>
</dbReference>
<dbReference type="SMR" id="P69520"/>
<dbReference type="DNASU" id="1487327"/>
<dbReference type="KEGG" id="vg:1487327"/>
<dbReference type="GO" id="GO:0033644">
    <property type="term" value="C:host cell membrane"/>
    <property type="evidence" value="ECO:0007669"/>
    <property type="project" value="UniProtKB-SubCell"/>
</dbReference>
<dbReference type="GO" id="GO:0016020">
    <property type="term" value="C:membrane"/>
    <property type="evidence" value="ECO:0007669"/>
    <property type="project" value="UniProtKB-KW"/>
</dbReference>
<dbReference type="GO" id="GO:0046872">
    <property type="term" value="F:metal ion binding"/>
    <property type="evidence" value="ECO:0007669"/>
    <property type="project" value="UniProtKB-KW"/>
</dbReference>
<dbReference type="GO" id="GO:0004748">
    <property type="term" value="F:ribonucleoside-diphosphate reductase activity, thioredoxin disulfide as acceptor"/>
    <property type="evidence" value="ECO:0007669"/>
    <property type="project" value="UniProtKB-EC"/>
</dbReference>
<dbReference type="GO" id="GO:0009263">
    <property type="term" value="P:deoxyribonucleotide biosynthetic process"/>
    <property type="evidence" value="ECO:0007669"/>
    <property type="project" value="InterPro"/>
</dbReference>
<dbReference type="GO" id="GO:0006260">
    <property type="term" value="P:DNA replication"/>
    <property type="evidence" value="ECO:0007669"/>
    <property type="project" value="UniProtKB-KW"/>
</dbReference>
<dbReference type="GO" id="GO:0019046">
    <property type="term" value="P:release from viral latency"/>
    <property type="evidence" value="ECO:0007669"/>
    <property type="project" value="UniProtKB-KW"/>
</dbReference>
<dbReference type="CDD" id="cd01049">
    <property type="entry name" value="RNRR2"/>
    <property type="match status" value="1"/>
</dbReference>
<dbReference type="Gene3D" id="1.10.620.20">
    <property type="entry name" value="Ribonucleotide Reductase, subunit A"/>
    <property type="match status" value="1"/>
</dbReference>
<dbReference type="HAMAP" id="MF_04028">
    <property type="entry name" value="HSV_RIR2"/>
    <property type="match status" value="1"/>
</dbReference>
<dbReference type="InterPro" id="IPR009078">
    <property type="entry name" value="Ferritin-like_SF"/>
</dbReference>
<dbReference type="InterPro" id="IPR034715">
    <property type="entry name" value="HSV_RIR2"/>
</dbReference>
<dbReference type="InterPro" id="IPR012348">
    <property type="entry name" value="RNR-like"/>
</dbReference>
<dbReference type="InterPro" id="IPR033909">
    <property type="entry name" value="RNR_small"/>
</dbReference>
<dbReference type="InterPro" id="IPR030475">
    <property type="entry name" value="RNR_small_AS"/>
</dbReference>
<dbReference type="InterPro" id="IPR000358">
    <property type="entry name" value="RNR_small_fam"/>
</dbReference>
<dbReference type="PANTHER" id="PTHR23409">
    <property type="entry name" value="RIBONUCLEOSIDE-DIPHOSPHATE REDUCTASE SMALL CHAIN"/>
    <property type="match status" value="1"/>
</dbReference>
<dbReference type="PANTHER" id="PTHR23409:SF18">
    <property type="entry name" value="RIBONUCLEOSIDE-DIPHOSPHATE REDUCTASE SUBUNIT M2"/>
    <property type="match status" value="1"/>
</dbReference>
<dbReference type="Pfam" id="PF00268">
    <property type="entry name" value="Ribonuc_red_sm"/>
    <property type="match status" value="1"/>
</dbReference>
<dbReference type="SUPFAM" id="SSF47240">
    <property type="entry name" value="Ferritin-like"/>
    <property type="match status" value="1"/>
</dbReference>
<dbReference type="PROSITE" id="PS00368">
    <property type="entry name" value="RIBORED_SMALL"/>
    <property type="match status" value="1"/>
</dbReference>
<accession>P69520</accession>
<accession>P03174</accession>
<reference key="1">
    <citation type="journal article" date="1984" name="J. Virol.">
        <title>Organization of the left-hand end of the herpes simplex virus type 2 BglII N fragment.</title>
        <authorList>
            <person name="Galloway D.A."/>
            <person name="Swain M.A."/>
        </authorList>
    </citation>
    <scope>NUCLEOTIDE SEQUENCE [GENOMIC DNA]</scope>
</reference>
<reference key="2">
    <citation type="journal article" date="1983" name="EMBO J.">
        <title>DNA sequence homology between two co-linear loci on the HSV genome which have different transforming abilities.</title>
        <authorList>
            <person name="McLauchlan J."/>
            <person name="Clements J.B."/>
        </authorList>
    </citation>
    <scope>NUCLEOTIDE SEQUENCE [GENOMIC DNA]</scope>
</reference>
<reference key="3">
    <citation type="journal article" date="2009" name="Trends Biochem. Sci.">
        <title>Tinkering with a viral ribonucleotide reductase.</title>
        <authorList>
            <person name="Lembo D."/>
            <person name="Brune W."/>
        </authorList>
    </citation>
    <scope>REVIEW</scope>
</reference>
<organism>
    <name type="scientific">Human herpesvirus 2 (strain 333)</name>
    <name type="common">HHV-2</name>
    <name type="synonym">Human herpes simplex virus 2</name>
    <dbReference type="NCBI Taxonomy" id="10313"/>
    <lineage>
        <taxon>Viruses</taxon>
        <taxon>Duplodnaviria</taxon>
        <taxon>Heunggongvirae</taxon>
        <taxon>Peploviricota</taxon>
        <taxon>Herviviricetes</taxon>
        <taxon>Herpesvirales</taxon>
        <taxon>Orthoherpesviridae</taxon>
        <taxon>Alphaherpesvirinae</taxon>
        <taxon>Simplexvirus</taxon>
        <taxon>Simplexvirus humanalpha2</taxon>
        <taxon>Human herpesvirus 2</taxon>
    </lineage>
</organism>
<name>RIR2_HHV23</name>
<feature type="chain" id="PRO_0000190505" description="Ribonucleoside-diphosphate reductase small subunit">
    <location>
        <begin position="1"/>
        <end position="337"/>
    </location>
</feature>
<feature type="transmembrane region" description="Helical" evidence="1">
    <location>
        <begin position="177"/>
        <end position="197"/>
    </location>
</feature>
<feature type="region of interest" description="Disordered" evidence="2">
    <location>
        <begin position="1"/>
        <end position="22"/>
    </location>
</feature>
<feature type="active site" evidence="1">
    <location>
        <position position="128"/>
    </location>
</feature>
<feature type="binding site" evidence="1">
    <location>
        <position position="91"/>
    </location>
    <ligand>
        <name>Fe cation</name>
        <dbReference type="ChEBI" id="CHEBI:24875"/>
        <label>1</label>
    </ligand>
</feature>
<feature type="binding site" evidence="1">
    <location>
        <position position="121"/>
    </location>
    <ligand>
        <name>Fe cation</name>
        <dbReference type="ChEBI" id="CHEBI:24875"/>
        <label>1</label>
    </ligand>
</feature>
<feature type="binding site" evidence="1">
    <location>
        <position position="121"/>
    </location>
    <ligand>
        <name>Fe cation</name>
        <dbReference type="ChEBI" id="CHEBI:24875"/>
        <label>2</label>
    </ligand>
</feature>
<feature type="binding site" evidence="1">
    <location>
        <position position="124"/>
    </location>
    <ligand>
        <name>Fe cation</name>
        <dbReference type="ChEBI" id="CHEBI:24875"/>
        <label>1</label>
    </ligand>
</feature>
<feature type="binding site" evidence="1">
    <location>
        <position position="184"/>
    </location>
    <ligand>
        <name>Fe cation</name>
        <dbReference type="ChEBI" id="CHEBI:24875"/>
        <label>2</label>
    </ligand>
</feature>
<feature type="binding site" evidence="1">
    <location>
        <position position="218"/>
    </location>
    <ligand>
        <name>Fe cation</name>
        <dbReference type="ChEBI" id="CHEBI:24875"/>
        <label>2</label>
    </ligand>
</feature>
<feature type="binding site" evidence="1">
    <location>
        <position position="221"/>
    </location>
    <ligand>
        <name>Fe cation</name>
        <dbReference type="ChEBI" id="CHEBI:24875"/>
        <label>2</label>
    </ligand>
</feature>
<feature type="sequence conflict" description="In Ref. 2; CAA24930." evidence="3" ref="2">
    <original>I</original>
    <variation>V</variation>
    <location>
        <position position="173"/>
    </location>
</feature>
<feature type="sequence conflict" description="In Ref. 2; CAA24930." evidence="3" ref="2">
    <original>G</original>
    <variation>D</variation>
    <location>
        <position position="235"/>
    </location>
</feature>
<evidence type="ECO:0000255" key="1">
    <source>
        <dbReference type="HAMAP-Rule" id="MF_04028"/>
    </source>
</evidence>
<evidence type="ECO:0000256" key="2">
    <source>
        <dbReference type="SAM" id="MobiDB-lite"/>
    </source>
</evidence>
<evidence type="ECO:0000305" key="3"/>
<keyword id="KW-0235">DNA replication</keyword>
<keyword id="KW-1043">Host membrane</keyword>
<keyword id="KW-0408">Iron</keyword>
<keyword id="KW-0472">Membrane</keyword>
<keyword id="KW-0479">Metal-binding</keyword>
<keyword id="KW-0560">Oxidoreductase</keyword>
<keyword id="KW-0812">Transmembrane</keyword>
<keyword id="KW-1133">Transmembrane helix</keyword>
<keyword id="KW-1251">Viral latency</keyword>
<keyword id="KW-1272">Viral reactivation from latency</keyword>
<comment type="function">
    <text evidence="1">Ribonucleoside-diphosphate reductase holoenzyme provides the precursors necessary for viral DNA synthesis. Allows virus growth in non-dividing cells, as well as reactivation from latency in infected hosts. Catalyzes the biosynthesis of deoxyribonucleotides from the corresponding ribonucleotides.</text>
</comment>
<comment type="catalytic activity">
    <reaction evidence="1">
        <text>a 2'-deoxyribonucleoside 5'-diphosphate + [thioredoxin]-disulfide + H2O = a ribonucleoside 5'-diphosphate + [thioredoxin]-dithiol</text>
        <dbReference type="Rhea" id="RHEA:23252"/>
        <dbReference type="Rhea" id="RHEA-COMP:10698"/>
        <dbReference type="Rhea" id="RHEA-COMP:10700"/>
        <dbReference type="ChEBI" id="CHEBI:15377"/>
        <dbReference type="ChEBI" id="CHEBI:29950"/>
        <dbReference type="ChEBI" id="CHEBI:50058"/>
        <dbReference type="ChEBI" id="CHEBI:57930"/>
        <dbReference type="ChEBI" id="CHEBI:73316"/>
        <dbReference type="EC" id="1.17.4.1"/>
    </reaction>
</comment>
<comment type="cofactor">
    <cofactor evidence="1">
        <name>Fe cation</name>
        <dbReference type="ChEBI" id="CHEBI:24875"/>
    </cofactor>
</comment>
<comment type="subunit">
    <text evidence="1">Heterotetramer composed of a homodimer of the large subunit (R1) and a homodimer of the small subunit (R2). Larger multisubunit protein complex are also active, composed of (R1)n(R2)n.</text>
</comment>
<comment type="subcellular location">
    <subcellularLocation>
        <location evidence="1">Host membrane</location>
        <topology evidence="1">Single-pass membrane protein</topology>
    </subcellularLocation>
</comment>
<comment type="similarity">
    <text evidence="1">Belongs to the ribonucleoside diphosphate reductase small chain family.</text>
</comment>
<organismHost>
    <name type="scientific">Homo sapiens</name>
    <name type="common">Human</name>
    <dbReference type="NCBI Taxonomy" id="9606"/>
</organismHost>